<proteinExistence type="inferred from homology"/>
<protein>
    <recommendedName>
        <fullName evidence="1">Probable DNA-directed RNA polymerase subunit delta</fullName>
    </recommendedName>
    <alternativeName>
        <fullName evidence="1">RNAP delta factor</fullName>
    </alternativeName>
</protein>
<sequence length="176" mass="20881">MKIQDYTKQMVDEKSFIDMAYTLLNDKGETMNLYDIIDEFRALGDYEYEEIENRVVQFYTDLNTDGRFLNVGENLWGLRDWYSVDDIEEKIAPTIQKFDILDADDEEDQNLKLLGEDEMDDDDDIPAQTDDQEELNDPEDEQVEEEINHSDIVIEEDEDELDEDEEVFEDEEDFND</sequence>
<reference key="1">
    <citation type="journal article" date="2004" name="Proc. Natl. Acad. Sci. U.S.A.">
        <title>Complete genomes of two clinical Staphylococcus aureus strains: evidence for the rapid evolution of virulence and drug resistance.</title>
        <authorList>
            <person name="Holden M.T.G."/>
            <person name="Feil E.J."/>
            <person name="Lindsay J.A."/>
            <person name="Peacock S.J."/>
            <person name="Day N.P.J."/>
            <person name="Enright M.C."/>
            <person name="Foster T.J."/>
            <person name="Moore C.E."/>
            <person name="Hurst L."/>
            <person name="Atkin R."/>
            <person name="Barron A."/>
            <person name="Bason N."/>
            <person name="Bentley S.D."/>
            <person name="Chillingworth C."/>
            <person name="Chillingworth T."/>
            <person name="Churcher C."/>
            <person name="Clark L."/>
            <person name="Corton C."/>
            <person name="Cronin A."/>
            <person name="Doggett J."/>
            <person name="Dowd L."/>
            <person name="Feltwell T."/>
            <person name="Hance Z."/>
            <person name="Harris B."/>
            <person name="Hauser H."/>
            <person name="Holroyd S."/>
            <person name="Jagels K."/>
            <person name="James K.D."/>
            <person name="Lennard N."/>
            <person name="Line A."/>
            <person name="Mayes R."/>
            <person name="Moule S."/>
            <person name="Mungall K."/>
            <person name="Ormond D."/>
            <person name="Quail M.A."/>
            <person name="Rabbinowitsch E."/>
            <person name="Rutherford K.M."/>
            <person name="Sanders M."/>
            <person name="Sharp S."/>
            <person name="Simmonds M."/>
            <person name="Stevens K."/>
            <person name="Whitehead S."/>
            <person name="Barrell B.G."/>
            <person name="Spratt B.G."/>
            <person name="Parkhill J."/>
        </authorList>
    </citation>
    <scope>NUCLEOTIDE SEQUENCE [LARGE SCALE GENOMIC DNA]</scope>
    <source>
        <strain>MSSA476</strain>
    </source>
</reference>
<comment type="function">
    <text evidence="1">Participates in both the initiation and recycling phases of transcription. In the presence of the delta subunit, RNAP displays an increased specificity of transcription, a decreased affinity for nucleic acids, and an increased efficiency of RNA synthesis because of enhanced recycling.</text>
</comment>
<comment type="subunit">
    <text evidence="1">RNAP is composed of a core of 2 alpha, a beta and a beta' subunits. The core is associated with a delta subunit and one of several sigma factors.</text>
</comment>
<comment type="similarity">
    <text evidence="1">Belongs to the RpoE family.</text>
</comment>
<feature type="chain" id="PRO_0000204324" description="Probable DNA-directed RNA polymerase subunit delta">
    <location>
        <begin position="1"/>
        <end position="176"/>
    </location>
</feature>
<feature type="domain" description="HTH HARE-type" evidence="2">
    <location>
        <begin position="14"/>
        <end position="81"/>
    </location>
</feature>
<feature type="region of interest" description="Disordered" evidence="3">
    <location>
        <begin position="114"/>
        <end position="176"/>
    </location>
</feature>
<feature type="compositionally biased region" description="Acidic residues" evidence="3">
    <location>
        <begin position="116"/>
        <end position="145"/>
    </location>
</feature>
<feature type="compositionally biased region" description="Acidic residues" evidence="3">
    <location>
        <begin position="153"/>
        <end position="176"/>
    </location>
</feature>
<accession>Q6G7I2</accession>
<dbReference type="EMBL" id="BX571857">
    <property type="protein sequence ID" value="CAG43839.1"/>
    <property type="molecule type" value="Genomic_DNA"/>
</dbReference>
<dbReference type="RefSeq" id="WP_000701483.1">
    <property type="nucleotide sequence ID" value="NC_002953.3"/>
</dbReference>
<dbReference type="SMR" id="Q6G7I2"/>
<dbReference type="GeneID" id="98346435"/>
<dbReference type="KEGG" id="sas:SAS2031"/>
<dbReference type="HOGENOM" id="CLU_116648_1_0_9"/>
<dbReference type="GO" id="GO:0000428">
    <property type="term" value="C:DNA-directed RNA polymerase complex"/>
    <property type="evidence" value="ECO:0007669"/>
    <property type="project" value="UniProtKB-KW"/>
</dbReference>
<dbReference type="GO" id="GO:0003899">
    <property type="term" value="F:DNA-directed RNA polymerase activity"/>
    <property type="evidence" value="ECO:0007669"/>
    <property type="project" value="UniProtKB-UniRule"/>
</dbReference>
<dbReference type="GO" id="GO:0006351">
    <property type="term" value="P:DNA-templated transcription"/>
    <property type="evidence" value="ECO:0007669"/>
    <property type="project" value="InterPro"/>
</dbReference>
<dbReference type="GO" id="GO:0006355">
    <property type="term" value="P:regulation of DNA-templated transcription"/>
    <property type="evidence" value="ECO:0007669"/>
    <property type="project" value="UniProtKB-UniRule"/>
</dbReference>
<dbReference type="Gene3D" id="1.10.10.1250">
    <property type="entry name" value="RNA polymerase, subunit delta, N-terminal domain"/>
    <property type="match status" value="1"/>
</dbReference>
<dbReference type="HAMAP" id="MF_00357">
    <property type="entry name" value="RNApol_bact_RpoE"/>
    <property type="match status" value="1"/>
</dbReference>
<dbReference type="InterPro" id="IPR007759">
    <property type="entry name" value="Asxl_HARE-HTH"/>
</dbReference>
<dbReference type="InterPro" id="IPR038087">
    <property type="entry name" value="RNAP_delta_N_dom_sf"/>
</dbReference>
<dbReference type="InterPro" id="IPR029757">
    <property type="entry name" value="RpoE"/>
</dbReference>
<dbReference type="NCBIfam" id="TIGR04567">
    <property type="entry name" value="RNAP_delt_lowGC"/>
    <property type="match status" value="1"/>
</dbReference>
<dbReference type="Pfam" id="PF05066">
    <property type="entry name" value="HARE-HTH"/>
    <property type="match status" value="1"/>
</dbReference>
<dbReference type="PROSITE" id="PS51913">
    <property type="entry name" value="HTH_HARE"/>
    <property type="match status" value="1"/>
</dbReference>
<organism>
    <name type="scientific">Staphylococcus aureus (strain MSSA476)</name>
    <dbReference type="NCBI Taxonomy" id="282459"/>
    <lineage>
        <taxon>Bacteria</taxon>
        <taxon>Bacillati</taxon>
        <taxon>Bacillota</taxon>
        <taxon>Bacilli</taxon>
        <taxon>Bacillales</taxon>
        <taxon>Staphylococcaceae</taxon>
        <taxon>Staphylococcus</taxon>
    </lineage>
</organism>
<evidence type="ECO:0000255" key="1">
    <source>
        <dbReference type="HAMAP-Rule" id="MF_00357"/>
    </source>
</evidence>
<evidence type="ECO:0000255" key="2">
    <source>
        <dbReference type="PROSITE-ProRule" id="PRU01261"/>
    </source>
</evidence>
<evidence type="ECO:0000256" key="3">
    <source>
        <dbReference type="SAM" id="MobiDB-lite"/>
    </source>
</evidence>
<name>RPOE_STAAS</name>
<keyword id="KW-0240">DNA-directed RNA polymerase</keyword>
<keyword id="KW-0548">Nucleotidyltransferase</keyword>
<keyword id="KW-0804">Transcription</keyword>
<keyword id="KW-0808">Transferase</keyword>
<gene>
    <name evidence="1" type="primary">rpoE</name>
    <name type="ordered locus">SAS2031</name>
</gene>